<reference key="1">
    <citation type="journal article" date="2008" name="Genomics">
        <title>Characterization of ST-4821 complex, a unique Neisseria meningitidis clone.</title>
        <authorList>
            <person name="Peng J."/>
            <person name="Yang L."/>
            <person name="Yang F."/>
            <person name="Yang J."/>
            <person name="Yan Y."/>
            <person name="Nie H."/>
            <person name="Zhang X."/>
            <person name="Xiong Z."/>
            <person name="Jiang Y."/>
            <person name="Cheng F."/>
            <person name="Xu X."/>
            <person name="Chen S."/>
            <person name="Sun L."/>
            <person name="Li W."/>
            <person name="Shen Y."/>
            <person name="Shao Z."/>
            <person name="Liang X."/>
            <person name="Xu J."/>
            <person name="Jin Q."/>
        </authorList>
    </citation>
    <scope>NUCLEOTIDE SEQUENCE [LARGE SCALE GENOMIC DNA]</scope>
    <source>
        <strain>053442</strain>
    </source>
</reference>
<dbReference type="EC" id="2.7.11.33" evidence="1"/>
<dbReference type="EC" id="2.7.4.28" evidence="1"/>
<dbReference type="EMBL" id="CP000381">
    <property type="protein sequence ID" value="ABX72765.1"/>
    <property type="molecule type" value="Genomic_DNA"/>
</dbReference>
<dbReference type="RefSeq" id="WP_002214270.1">
    <property type="nucleotide sequence ID" value="NC_010120.1"/>
</dbReference>
<dbReference type="SMR" id="A9M2P6"/>
<dbReference type="KEGG" id="nmn:NMCC_0567"/>
<dbReference type="HOGENOM" id="CLU_046206_1_0_4"/>
<dbReference type="Proteomes" id="UP000001177">
    <property type="component" value="Chromosome"/>
</dbReference>
<dbReference type="GO" id="GO:0043531">
    <property type="term" value="F:ADP binding"/>
    <property type="evidence" value="ECO:0007669"/>
    <property type="project" value="UniProtKB-UniRule"/>
</dbReference>
<dbReference type="GO" id="GO:0005524">
    <property type="term" value="F:ATP binding"/>
    <property type="evidence" value="ECO:0007669"/>
    <property type="project" value="InterPro"/>
</dbReference>
<dbReference type="GO" id="GO:0016776">
    <property type="term" value="F:phosphotransferase activity, phosphate group as acceptor"/>
    <property type="evidence" value="ECO:0007669"/>
    <property type="project" value="UniProtKB-UniRule"/>
</dbReference>
<dbReference type="GO" id="GO:0004674">
    <property type="term" value="F:protein serine/threonine kinase activity"/>
    <property type="evidence" value="ECO:0007669"/>
    <property type="project" value="UniProtKB-UniRule"/>
</dbReference>
<dbReference type="HAMAP" id="MF_01062">
    <property type="entry name" value="PSRP"/>
    <property type="match status" value="1"/>
</dbReference>
<dbReference type="InterPro" id="IPR005177">
    <property type="entry name" value="Kinase-pyrophosphorylase"/>
</dbReference>
<dbReference type="InterPro" id="IPR026530">
    <property type="entry name" value="PSRP"/>
</dbReference>
<dbReference type="NCBIfam" id="NF003742">
    <property type="entry name" value="PRK05339.1"/>
    <property type="match status" value="1"/>
</dbReference>
<dbReference type="PANTHER" id="PTHR31756">
    <property type="entry name" value="PYRUVATE, PHOSPHATE DIKINASE REGULATORY PROTEIN 1, CHLOROPLASTIC"/>
    <property type="match status" value="1"/>
</dbReference>
<dbReference type="PANTHER" id="PTHR31756:SF3">
    <property type="entry name" value="PYRUVATE, PHOSPHATE DIKINASE REGULATORY PROTEIN 1, CHLOROPLASTIC"/>
    <property type="match status" value="1"/>
</dbReference>
<dbReference type="Pfam" id="PF03618">
    <property type="entry name" value="Kinase-PPPase"/>
    <property type="match status" value="1"/>
</dbReference>
<proteinExistence type="inferred from homology"/>
<organism>
    <name type="scientific">Neisseria meningitidis serogroup C (strain 053442)</name>
    <dbReference type="NCBI Taxonomy" id="374833"/>
    <lineage>
        <taxon>Bacteria</taxon>
        <taxon>Pseudomonadati</taxon>
        <taxon>Pseudomonadota</taxon>
        <taxon>Betaproteobacteria</taxon>
        <taxon>Neisseriales</taxon>
        <taxon>Neisseriaceae</taxon>
        <taxon>Neisseria</taxon>
    </lineage>
</organism>
<accession>A9M2P6</accession>
<name>PSRP_NEIM0</name>
<protein>
    <recommendedName>
        <fullName evidence="1">Putative phosphoenolpyruvate synthase regulatory protein</fullName>
        <shortName evidence="1">PEP synthase regulatory protein</shortName>
        <shortName evidence="1">PSRP</shortName>
        <ecNumber evidence="1">2.7.11.33</ecNumber>
        <ecNumber evidence="1">2.7.4.28</ecNumber>
    </recommendedName>
    <alternativeName>
        <fullName evidence="1">Pyruvate, water dikinase regulatory protein</fullName>
    </alternativeName>
</protein>
<gene>
    <name type="ordered locus">NMCC_0567</name>
</gene>
<comment type="function">
    <text evidence="1">Bifunctional serine/threonine kinase and phosphorylase involved in the regulation of the phosphoenolpyruvate synthase (PEPS) by catalyzing its phosphorylation/dephosphorylation.</text>
</comment>
<comment type="catalytic activity">
    <reaction evidence="1">
        <text>[pyruvate, water dikinase] + ADP = [pyruvate, water dikinase]-phosphate + AMP + H(+)</text>
        <dbReference type="Rhea" id="RHEA:46020"/>
        <dbReference type="Rhea" id="RHEA-COMP:11425"/>
        <dbReference type="Rhea" id="RHEA-COMP:11426"/>
        <dbReference type="ChEBI" id="CHEBI:15378"/>
        <dbReference type="ChEBI" id="CHEBI:43176"/>
        <dbReference type="ChEBI" id="CHEBI:68546"/>
        <dbReference type="ChEBI" id="CHEBI:456215"/>
        <dbReference type="ChEBI" id="CHEBI:456216"/>
        <dbReference type="EC" id="2.7.11.33"/>
    </reaction>
</comment>
<comment type="catalytic activity">
    <reaction evidence="1">
        <text>[pyruvate, water dikinase]-phosphate + phosphate + H(+) = [pyruvate, water dikinase] + diphosphate</text>
        <dbReference type="Rhea" id="RHEA:48580"/>
        <dbReference type="Rhea" id="RHEA-COMP:11425"/>
        <dbReference type="Rhea" id="RHEA-COMP:11426"/>
        <dbReference type="ChEBI" id="CHEBI:15378"/>
        <dbReference type="ChEBI" id="CHEBI:33019"/>
        <dbReference type="ChEBI" id="CHEBI:43176"/>
        <dbReference type="ChEBI" id="CHEBI:43474"/>
        <dbReference type="ChEBI" id="CHEBI:68546"/>
        <dbReference type="EC" id="2.7.4.28"/>
    </reaction>
</comment>
<comment type="similarity">
    <text evidence="1">Belongs to the pyruvate, phosphate/water dikinase regulatory protein family. PSRP subfamily.</text>
</comment>
<evidence type="ECO:0000255" key="1">
    <source>
        <dbReference type="HAMAP-Rule" id="MF_01062"/>
    </source>
</evidence>
<feature type="chain" id="PRO_1000084468" description="Putative phosphoenolpyruvate synthase regulatory protein">
    <location>
        <begin position="1"/>
        <end position="273"/>
    </location>
</feature>
<feature type="binding site" evidence="1">
    <location>
        <begin position="154"/>
        <end position="161"/>
    </location>
    <ligand>
        <name>ADP</name>
        <dbReference type="ChEBI" id="CHEBI:456216"/>
    </ligand>
</feature>
<keyword id="KW-0418">Kinase</keyword>
<keyword id="KW-0547">Nucleotide-binding</keyword>
<keyword id="KW-0723">Serine/threonine-protein kinase</keyword>
<keyword id="KW-0808">Transferase</keyword>
<sequence length="273" mass="30966">MSSPRHVFYISDRTGLTAENIGEALLNQFGNLSFKRHTHPFVDTPEKARAVVEKVNRSRQENGQRPIAFVSVVDDEIRRIIKGADAFQINFFETFLGLLEKELNTEATASEQGHHSIGNTKRYDARMEAVNFSLNHDDGVSDKNLQEADVILMGVSRSGKTPTCLYLALQYGIRAANYPLIPDDLESADLPRMVKPYRDKLFGLTIQPERLQAIRQERRPNSTYAKIDTCRSEVADAQSMFRRHGIPFANTTDKSVEELAVHILQACKLKRRF</sequence>